<feature type="chain" id="PRO_1000024992" description="Quinolinate synthase">
    <location>
        <begin position="1"/>
        <end position="367"/>
    </location>
</feature>
<feature type="binding site" evidence="1">
    <location>
        <position position="45"/>
    </location>
    <ligand>
        <name>iminosuccinate</name>
        <dbReference type="ChEBI" id="CHEBI:77875"/>
    </ligand>
</feature>
<feature type="binding site" evidence="1">
    <location>
        <position position="62"/>
    </location>
    <ligand>
        <name>iminosuccinate</name>
        <dbReference type="ChEBI" id="CHEBI:77875"/>
    </ligand>
</feature>
<feature type="binding site" evidence="1">
    <location>
        <position position="109"/>
    </location>
    <ligand>
        <name>[4Fe-4S] cluster</name>
        <dbReference type="ChEBI" id="CHEBI:49883"/>
    </ligand>
</feature>
<feature type="binding site" evidence="1">
    <location>
        <begin position="140"/>
        <end position="142"/>
    </location>
    <ligand>
        <name>iminosuccinate</name>
        <dbReference type="ChEBI" id="CHEBI:77875"/>
    </ligand>
</feature>
<feature type="binding site" evidence="1">
    <location>
        <position position="161"/>
    </location>
    <ligand>
        <name>iminosuccinate</name>
        <dbReference type="ChEBI" id="CHEBI:77875"/>
    </ligand>
</feature>
<feature type="binding site" evidence="1">
    <location>
        <position position="229"/>
    </location>
    <ligand>
        <name>[4Fe-4S] cluster</name>
        <dbReference type="ChEBI" id="CHEBI:49883"/>
    </ligand>
</feature>
<feature type="binding site" evidence="1">
    <location>
        <begin position="255"/>
        <end position="257"/>
    </location>
    <ligand>
        <name>iminosuccinate</name>
        <dbReference type="ChEBI" id="CHEBI:77875"/>
    </ligand>
</feature>
<feature type="binding site" evidence="1">
    <location>
        <position position="272"/>
    </location>
    <ligand>
        <name>iminosuccinate</name>
        <dbReference type="ChEBI" id="CHEBI:77875"/>
    </ligand>
</feature>
<feature type="binding site" evidence="1">
    <location>
        <position position="319"/>
    </location>
    <ligand>
        <name>[4Fe-4S] cluster</name>
        <dbReference type="ChEBI" id="CHEBI:49883"/>
    </ligand>
</feature>
<dbReference type="EC" id="2.5.1.72" evidence="1"/>
<dbReference type="EMBL" id="CP000557">
    <property type="protein sequence ID" value="ABO67874.1"/>
    <property type="molecule type" value="Genomic_DNA"/>
</dbReference>
<dbReference type="RefSeq" id="WP_011887898.1">
    <property type="nucleotide sequence ID" value="NC_009328.1"/>
</dbReference>
<dbReference type="SMR" id="A4IRC0"/>
<dbReference type="KEGG" id="gtn:GTNG_2529"/>
<dbReference type="eggNOG" id="COG0379">
    <property type="taxonomic scope" value="Bacteria"/>
</dbReference>
<dbReference type="HOGENOM" id="CLU_047382_2_0_9"/>
<dbReference type="UniPathway" id="UPA00253">
    <property type="reaction ID" value="UER00327"/>
</dbReference>
<dbReference type="Proteomes" id="UP000001578">
    <property type="component" value="Chromosome"/>
</dbReference>
<dbReference type="GO" id="GO:0005829">
    <property type="term" value="C:cytosol"/>
    <property type="evidence" value="ECO:0007669"/>
    <property type="project" value="TreeGrafter"/>
</dbReference>
<dbReference type="GO" id="GO:0051539">
    <property type="term" value="F:4 iron, 4 sulfur cluster binding"/>
    <property type="evidence" value="ECO:0007669"/>
    <property type="project" value="UniProtKB-KW"/>
</dbReference>
<dbReference type="GO" id="GO:0046872">
    <property type="term" value="F:metal ion binding"/>
    <property type="evidence" value="ECO:0007669"/>
    <property type="project" value="UniProtKB-KW"/>
</dbReference>
<dbReference type="GO" id="GO:0008987">
    <property type="term" value="F:quinolinate synthetase A activity"/>
    <property type="evidence" value="ECO:0007669"/>
    <property type="project" value="UniProtKB-UniRule"/>
</dbReference>
<dbReference type="GO" id="GO:0034628">
    <property type="term" value="P:'de novo' NAD biosynthetic process from L-aspartate"/>
    <property type="evidence" value="ECO:0007669"/>
    <property type="project" value="TreeGrafter"/>
</dbReference>
<dbReference type="FunFam" id="3.40.50.10800:FF:000001">
    <property type="entry name" value="Quinolinate synthase A"/>
    <property type="match status" value="1"/>
</dbReference>
<dbReference type="Gene3D" id="3.40.50.10800">
    <property type="entry name" value="NadA-like"/>
    <property type="match status" value="3"/>
</dbReference>
<dbReference type="HAMAP" id="MF_00569">
    <property type="entry name" value="NadA_type3"/>
    <property type="match status" value="1"/>
</dbReference>
<dbReference type="InterPro" id="IPR003473">
    <property type="entry name" value="NadA"/>
</dbReference>
<dbReference type="InterPro" id="IPR036094">
    <property type="entry name" value="NadA_sf"/>
</dbReference>
<dbReference type="InterPro" id="IPR023515">
    <property type="entry name" value="Quinolinate_synth_A_type3"/>
</dbReference>
<dbReference type="NCBIfam" id="TIGR00550">
    <property type="entry name" value="nadA"/>
    <property type="match status" value="1"/>
</dbReference>
<dbReference type="NCBIfam" id="NF006880">
    <property type="entry name" value="PRK09375.2-1"/>
    <property type="match status" value="1"/>
</dbReference>
<dbReference type="NCBIfam" id="NF006883">
    <property type="entry name" value="PRK09375.2-4"/>
    <property type="match status" value="1"/>
</dbReference>
<dbReference type="PANTHER" id="PTHR30573:SF0">
    <property type="entry name" value="QUINOLINATE SYNTHASE, CHLOROPLASTIC"/>
    <property type="match status" value="1"/>
</dbReference>
<dbReference type="PANTHER" id="PTHR30573">
    <property type="entry name" value="QUINOLINATE SYNTHETASE A"/>
    <property type="match status" value="1"/>
</dbReference>
<dbReference type="Pfam" id="PF02445">
    <property type="entry name" value="NadA"/>
    <property type="match status" value="1"/>
</dbReference>
<dbReference type="SUPFAM" id="SSF142754">
    <property type="entry name" value="NadA-like"/>
    <property type="match status" value="1"/>
</dbReference>
<accession>A4IRC0</accession>
<protein>
    <recommendedName>
        <fullName evidence="1">Quinolinate synthase</fullName>
        <ecNumber evidence="1">2.5.1.72</ecNumber>
    </recommendedName>
</protein>
<reference key="1">
    <citation type="journal article" date="2007" name="Proc. Natl. Acad. Sci. U.S.A.">
        <title>Genome and proteome of long-chain alkane degrading Geobacillus thermodenitrificans NG80-2 isolated from a deep-subsurface oil reservoir.</title>
        <authorList>
            <person name="Feng L."/>
            <person name="Wang W."/>
            <person name="Cheng J."/>
            <person name="Ren Y."/>
            <person name="Zhao G."/>
            <person name="Gao C."/>
            <person name="Tang Y."/>
            <person name="Liu X."/>
            <person name="Han W."/>
            <person name="Peng X."/>
            <person name="Liu R."/>
            <person name="Wang L."/>
        </authorList>
    </citation>
    <scope>NUCLEOTIDE SEQUENCE [LARGE SCALE GENOMIC DNA]</scope>
    <source>
        <strain>NG80-2</strain>
    </source>
</reference>
<keyword id="KW-0004">4Fe-4S</keyword>
<keyword id="KW-0963">Cytoplasm</keyword>
<keyword id="KW-0408">Iron</keyword>
<keyword id="KW-0411">Iron-sulfur</keyword>
<keyword id="KW-0479">Metal-binding</keyword>
<keyword id="KW-0662">Pyridine nucleotide biosynthesis</keyword>
<keyword id="KW-0808">Transferase</keyword>
<organism>
    <name type="scientific">Geobacillus thermodenitrificans (strain NG80-2)</name>
    <dbReference type="NCBI Taxonomy" id="420246"/>
    <lineage>
        <taxon>Bacteria</taxon>
        <taxon>Bacillati</taxon>
        <taxon>Bacillota</taxon>
        <taxon>Bacilli</taxon>
        <taxon>Bacillales</taxon>
        <taxon>Anoxybacillaceae</taxon>
        <taxon>Geobacillus</taxon>
    </lineage>
</organism>
<proteinExistence type="inferred from homology"/>
<sequence>MNVLEQFKQLDNMPEQYKTMDRDELEARARAVKEQLGRRLFIPGHHYQKDEVIQFADATGDSLQLAQLAAKNNEAEYIVFCGVHFMAETADILTSEEQTVILPDLRAGCSMADMADVFQVERAWAALTDRFGETILPLVYVNSTAAIKAFVGRNGGATVTSSNAQKMVAWAFSQKERIFFLPDQHLGRNTAYALGVGLDEMAVWDPYEETLQGNGDFDKVKVILWKGHCSVHENFNVRQIEHIRQTKPETKVIVHPECSWDVVQQADYAGSTKYIIETIRNASPGSRWAIGTEMNLVNRLMHEHPDKEIISLNPYMCPCLTMNRIDLPHFVWALESLSEGTVVNRITVPKEVAFEAKLALERMLALA</sequence>
<name>NADA_GEOTN</name>
<evidence type="ECO:0000255" key="1">
    <source>
        <dbReference type="HAMAP-Rule" id="MF_00569"/>
    </source>
</evidence>
<gene>
    <name evidence="1" type="primary">nadA</name>
    <name type="ordered locus">GTNG_2529</name>
</gene>
<comment type="function">
    <text evidence="1">Catalyzes the condensation of iminoaspartate with dihydroxyacetone phosphate to form quinolinate.</text>
</comment>
<comment type="catalytic activity">
    <reaction evidence="1">
        <text>iminosuccinate + dihydroxyacetone phosphate = quinolinate + phosphate + 2 H2O + H(+)</text>
        <dbReference type="Rhea" id="RHEA:25888"/>
        <dbReference type="ChEBI" id="CHEBI:15377"/>
        <dbReference type="ChEBI" id="CHEBI:15378"/>
        <dbReference type="ChEBI" id="CHEBI:29959"/>
        <dbReference type="ChEBI" id="CHEBI:43474"/>
        <dbReference type="ChEBI" id="CHEBI:57642"/>
        <dbReference type="ChEBI" id="CHEBI:77875"/>
        <dbReference type="EC" id="2.5.1.72"/>
    </reaction>
    <physiologicalReaction direction="left-to-right" evidence="1">
        <dbReference type="Rhea" id="RHEA:25889"/>
    </physiologicalReaction>
</comment>
<comment type="cofactor">
    <cofactor evidence="1">
        <name>[4Fe-4S] cluster</name>
        <dbReference type="ChEBI" id="CHEBI:49883"/>
    </cofactor>
    <text evidence="1">Binds 1 [4Fe-4S] cluster per subunit.</text>
</comment>
<comment type="pathway">
    <text evidence="1">Cofactor biosynthesis; NAD(+) biosynthesis; quinolinate from iminoaspartate: step 1/1.</text>
</comment>
<comment type="subcellular location">
    <subcellularLocation>
        <location evidence="1">Cytoplasm</location>
    </subcellularLocation>
</comment>
<comment type="similarity">
    <text evidence="1">Belongs to the quinolinate synthase family. Type 3 subfamily.</text>
</comment>